<feature type="peptide" id="PRO_0000044426" description="Neurokinin-A">
    <location>
        <begin position="1"/>
        <end position="10"/>
    </location>
</feature>
<feature type="modified residue" description="Methionine amide" evidence="1">
    <location>
        <position position="10"/>
    </location>
</feature>
<reference key="1">
    <citation type="journal article" date="1992" name="Eur. J. Biochem.">
        <title>Substance-P-related and neurokinin-A-related peptides from the brain of the cod and trout.</title>
        <authorList>
            <person name="Jensen J."/>
            <person name="Conlon J.M."/>
        </authorList>
    </citation>
    <scope>PROTEIN SEQUENCE</scope>
    <source>
        <tissue>Brain</tissue>
    </source>
</reference>
<comment type="function">
    <text>Tachykinins are active peptides which excite neurons, evoke behavioral responses, are potent vasodilators and secretagogues, and contract (directly or indirectly) many smooth muscles.</text>
</comment>
<comment type="subcellular location">
    <subcellularLocation>
        <location>Secreted</location>
    </subcellularLocation>
</comment>
<comment type="similarity">
    <text evidence="2">Belongs to the tachykinin family.</text>
</comment>
<dbReference type="PIR" id="S23186">
    <property type="entry name" value="S23186"/>
</dbReference>
<dbReference type="Proteomes" id="UP000694546">
    <property type="component" value="Unplaced"/>
</dbReference>
<dbReference type="GO" id="GO:0005576">
    <property type="term" value="C:extracellular region"/>
    <property type="evidence" value="ECO:0007669"/>
    <property type="project" value="UniProtKB-SubCell"/>
</dbReference>
<dbReference type="GO" id="GO:0007218">
    <property type="term" value="P:neuropeptide signaling pathway"/>
    <property type="evidence" value="ECO:0007669"/>
    <property type="project" value="UniProtKB-KW"/>
</dbReference>
<dbReference type="InterPro" id="IPR013055">
    <property type="entry name" value="Tachy_Neuro_lke_CS"/>
</dbReference>
<dbReference type="PROSITE" id="PS00267">
    <property type="entry name" value="TACHYKININ"/>
    <property type="match status" value="1"/>
</dbReference>
<accession>P69144</accession>
<accession>P28500</accession>
<protein>
    <recommendedName>
        <fullName>Neurokinin-A</fullName>
    </recommendedName>
    <alternativeName>
        <fullName>Neuromedin-L</fullName>
    </alternativeName>
    <alternativeName>
        <fullName>Substance K</fullName>
    </alternativeName>
</protein>
<organism>
    <name type="scientific">Gadus morhua</name>
    <name type="common">Atlantic cod</name>
    <dbReference type="NCBI Taxonomy" id="8049"/>
    <lineage>
        <taxon>Eukaryota</taxon>
        <taxon>Metazoa</taxon>
        <taxon>Chordata</taxon>
        <taxon>Craniata</taxon>
        <taxon>Vertebrata</taxon>
        <taxon>Euteleostomi</taxon>
        <taxon>Actinopterygii</taxon>
        <taxon>Neopterygii</taxon>
        <taxon>Teleostei</taxon>
        <taxon>Neoteleostei</taxon>
        <taxon>Acanthomorphata</taxon>
        <taxon>Zeiogadaria</taxon>
        <taxon>Gadariae</taxon>
        <taxon>Gadiformes</taxon>
        <taxon>Gadoidei</taxon>
        <taxon>Gadidae</taxon>
        <taxon>Gadus</taxon>
    </lineage>
</organism>
<proteinExistence type="evidence at protein level"/>
<evidence type="ECO:0000250" key="1"/>
<evidence type="ECO:0000305" key="2"/>
<name>TKNB_GADMO</name>
<keyword id="KW-0027">Amidation</keyword>
<keyword id="KW-0903">Direct protein sequencing</keyword>
<keyword id="KW-0527">Neuropeptide</keyword>
<keyword id="KW-1185">Reference proteome</keyword>
<keyword id="KW-0964">Secreted</keyword>
<sequence length="10" mass="1145">HKINSFVGLM</sequence>